<protein>
    <recommendedName>
        <fullName evidence="7">Sesquiterpene synthase Agr8</fullName>
        <ecNumber evidence="6">4.2.3.-</ecNumber>
        <ecNumber evidence="6">4.2.3.126</ecNumber>
        <ecNumber evidence="6">4.2.3.198</ecNumber>
    </recommendedName>
    <alternativeName>
        <fullName evidence="7">Terpene cyclase Agr8</fullName>
    </alternativeName>
</protein>
<organism>
    <name type="scientific">Cyclocybe aegerita</name>
    <name type="common">Black poplar mushroom</name>
    <name type="synonym">Agrocybe aegerita</name>
    <dbReference type="NCBI Taxonomy" id="1973307"/>
    <lineage>
        <taxon>Eukaryota</taxon>
        <taxon>Fungi</taxon>
        <taxon>Dikarya</taxon>
        <taxon>Basidiomycota</taxon>
        <taxon>Agaricomycotina</taxon>
        <taxon>Agaricomycetes</taxon>
        <taxon>Agaricomycetidae</taxon>
        <taxon>Agaricales</taxon>
        <taxon>Agaricineae</taxon>
        <taxon>Bolbitiaceae</taxon>
        <taxon>Cyclocybe</taxon>
    </lineage>
</organism>
<sequence length="353" mass="40511">MSEQQYTLPDLLQNWPWNRHLSPYYEEAKRESSAWVESFKPFDQDGQRAFDAYLLASLTYSHGSREFVRLGCDLMNFYFVYDEYTDVSDSAVADRLANIVIDAMRNPENSSQSGDHLLGKMTKHFWTRALAMAPAGSPCFEHFITTSETYLRAVTQEAEDRANKRVRKVDDYLRLRRDTCGARPTLALIEFGLNLPNEVVRHPSLVALTEAAVDLIILVNDMHSYVRELSCGHENHNLITAIMLEHRLNRQDAFHWLGSHCSRVVDQFLSDLDELPSWGEPTDSGVRDYINGLGQWVRGNDDWSTESKRYYGEDGETIRQERLVTTRSGESNYIKFGQVGVQDSVRIQPIEAN</sequence>
<reference key="1">
    <citation type="journal article" date="2020" name="ACS Chem. Biol.">
        <title>Agrocybe aegerita serves as a gateway for identifying sesquiterpene biosynthetic enzymes in higher fungi.</title>
        <authorList>
            <person name="Zhang C."/>
            <person name="Chen X."/>
            <person name="Orban A."/>
            <person name="Shukal S."/>
            <person name="Birk F."/>
            <person name="Too H.P."/>
            <person name="Ruehl M."/>
        </authorList>
    </citation>
    <scope>NUCLEOTIDE SEQUENCE [GENOMIC DNA]</scope>
    <scope>FUNCTION</scope>
    <scope>DOMAIN</scope>
    <scope>CATALYTIC ACTIVITY</scope>
    <source>
        <strain>AAE3_05024</strain>
    </source>
</reference>
<reference key="2">
    <citation type="journal article" date="2018" name="BMC Genomics">
        <title>The genome sequence of the commercially cultivated mushroom Agrocybe aegerita reveals a conserved repertoire of fruiting-related genes and a versatile suite of biopolymer-degrading enzymes.</title>
        <authorList>
            <person name="Gupta D.K."/>
            <person name="Ruehl M."/>
            <person name="Mishra B."/>
            <person name="Kleofas V."/>
            <person name="Hofrichter M."/>
            <person name="Herzog R."/>
            <person name="Pecyna M.J."/>
            <person name="Sharma R."/>
            <person name="Kellner H."/>
            <person name="Hennicke F."/>
            <person name="Thines M."/>
        </authorList>
    </citation>
    <scope>NUCLEOTIDE SEQUENCE [LARGE SCALE GENOMIC DNA]</scope>
    <source>
        <strain>AAE3_05024</strain>
    </source>
</reference>
<accession>A0A5Q0QMX1</accession>
<proteinExistence type="evidence at protein level"/>
<feature type="chain" id="PRO_0000451262" description="Sesquiterpene synthase Agr8">
    <location>
        <begin position="1"/>
        <end position="353"/>
    </location>
</feature>
<feature type="short sequence motif" description="DDXXD motif" evidence="2">
    <location>
        <begin position="82"/>
        <end position="86"/>
    </location>
</feature>
<feature type="binding site" evidence="3">
    <location>
        <position position="82"/>
    </location>
    <ligand>
        <name>Mg(2+)</name>
        <dbReference type="ChEBI" id="CHEBI:18420"/>
        <label>1</label>
    </ligand>
</feature>
<feature type="binding site" evidence="3">
    <location>
        <position position="82"/>
    </location>
    <ligand>
        <name>Mg(2+)</name>
        <dbReference type="ChEBI" id="CHEBI:18420"/>
        <label>2</label>
    </ligand>
</feature>
<feature type="binding site" evidence="3">
    <location>
        <position position="220"/>
    </location>
    <ligand>
        <name>Mg(2+)</name>
        <dbReference type="ChEBI" id="CHEBI:18420"/>
        <label>3</label>
    </ligand>
</feature>
<feature type="binding site" evidence="3">
    <location>
        <position position="224"/>
    </location>
    <ligand>
        <name>Mg(2+)</name>
        <dbReference type="ChEBI" id="CHEBI:18420"/>
        <label>3</label>
    </ligand>
</feature>
<feature type="binding site" evidence="3">
    <location>
        <position position="228"/>
    </location>
    <ligand>
        <name>Mg(2+)</name>
        <dbReference type="ChEBI" id="CHEBI:18420"/>
        <label>3</label>
    </ligand>
</feature>
<feature type="binding site" evidence="3">
    <location>
        <position position="309"/>
    </location>
    <ligand>
        <name>(2E,6E)-farnesyl diphosphate</name>
        <dbReference type="ChEBI" id="CHEBI:175763"/>
    </ligand>
</feature>
<feature type="binding site" evidence="3">
    <location>
        <position position="310"/>
    </location>
    <ligand>
        <name>(2E,6E)-farnesyl diphosphate</name>
        <dbReference type="ChEBI" id="CHEBI:175763"/>
    </ligand>
</feature>
<feature type="site" description="Plays a critical role in the stabilization of intermediate cation" evidence="1">
    <location>
        <position position="79"/>
    </location>
</feature>
<keyword id="KW-0456">Lyase</keyword>
<keyword id="KW-0460">Magnesium</keyword>
<keyword id="KW-0479">Metal-binding</keyword>
<comment type="function">
    <text evidence="6">Terpene cyclase that catalyzes the cyclization of farnesyl diphosphate (FPP) to various sesquiterpenes, including beta-elemene, gamma-muurolene, alpha-selinene, beta-selinene, beta-cadinene, delta-cadinene and alpha-cadinol.</text>
</comment>
<comment type="catalytic activity">
    <reaction evidence="6">
        <text>(2E,6E)-farnesyl diphosphate = gamma-muurolene + diphosphate</text>
        <dbReference type="Rhea" id="RHEA:33107"/>
        <dbReference type="ChEBI" id="CHEBI:33019"/>
        <dbReference type="ChEBI" id="CHEBI:64798"/>
        <dbReference type="ChEBI" id="CHEBI:175763"/>
        <dbReference type="EC" id="4.2.3.126"/>
    </reaction>
    <physiologicalReaction direction="left-to-right" evidence="6">
        <dbReference type="Rhea" id="RHEA:33108"/>
    </physiologicalReaction>
</comment>
<comment type="catalytic activity">
    <reaction evidence="6">
        <text>(2E,6E)-farnesyl diphosphate = alpha-selinene + diphosphate</text>
        <dbReference type="Rhea" id="RHEA:47052"/>
        <dbReference type="ChEBI" id="CHEBI:33019"/>
        <dbReference type="ChEBI" id="CHEBI:59961"/>
        <dbReference type="ChEBI" id="CHEBI:175763"/>
        <dbReference type="EC" id="4.2.3.198"/>
    </reaction>
    <physiologicalReaction direction="left-to-right" evidence="6">
        <dbReference type="Rhea" id="RHEA:47053"/>
    </physiologicalReaction>
</comment>
<comment type="catalytic activity">
    <reaction evidence="6">
        <text>(2E,6E)-farnesyl diphosphate = delta-cadinene + diphosphate</text>
        <dbReference type="Rhea" id="RHEA:56556"/>
        <dbReference type="ChEBI" id="CHEBI:33019"/>
        <dbReference type="ChEBI" id="CHEBI:140564"/>
        <dbReference type="ChEBI" id="CHEBI:175763"/>
    </reaction>
    <physiologicalReaction direction="left-to-right" evidence="5">
        <dbReference type="Rhea" id="RHEA:56557"/>
    </physiologicalReaction>
</comment>
<comment type="cofactor">
    <cofactor evidence="4">
        <name>Mg(2+)</name>
        <dbReference type="ChEBI" id="CHEBI:18420"/>
    </cofactor>
</comment>
<comment type="domain">
    <text evidence="6">The DDXXD motif is important for the catalytic activity, presumably through binding to Mg(2+).</text>
</comment>
<comment type="similarity">
    <text evidence="8">Belongs to the terpene synthase family.</text>
</comment>
<dbReference type="EC" id="4.2.3.-" evidence="6"/>
<dbReference type="EC" id="4.2.3.126" evidence="6"/>
<dbReference type="EC" id="4.2.3.198" evidence="6"/>
<dbReference type="EMBL" id="MN146031">
    <property type="protein sequence ID" value="QGA30884.1"/>
    <property type="molecule type" value="Genomic_DNA"/>
</dbReference>
<dbReference type="SMR" id="A0A5Q0QMX1"/>
<dbReference type="OrthoDB" id="6486656at2759"/>
<dbReference type="GO" id="GO:0046872">
    <property type="term" value="F:metal ion binding"/>
    <property type="evidence" value="ECO:0007669"/>
    <property type="project" value="UniProtKB-KW"/>
</dbReference>
<dbReference type="GO" id="GO:0010333">
    <property type="term" value="F:terpene synthase activity"/>
    <property type="evidence" value="ECO:0007669"/>
    <property type="project" value="InterPro"/>
</dbReference>
<dbReference type="GO" id="GO:0008299">
    <property type="term" value="P:isoprenoid biosynthetic process"/>
    <property type="evidence" value="ECO:0007669"/>
    <property type="project" value="UniProtKB-ARBA"/>
</dbReference>
<dbReference type="Gene3D" id="1.10.600.10">
    <property type="entry name" value="Farnesyl Diphosphate Synthase"/>
    <property type="match status" value="1"/>
</dbReference>
<dbReference type="InterPro" id="IPR008949">
    <property type="entry name" value="Isoprenoid_synthase_dom_sf"/>
</dbReference>
<dbReference type="InterPro" id="IPR034686">
    <property type="entry name" value="Terpene_cyclase-like_2"/>
</dbReference>
<dbReference type="PANTHER" id="PTHR35201:SF4">
    <property type="entry name" value="BETA-PINACENE SYNTHASE-RELATED"/>
    <property type="match status" value="1"/>
</dbReference>
<dbReference type="PANTHER" id="PTHR35201">
    <property type="entry name" value="TERPENE SYNTHASE"/>
    <property type="match status" value="1"/>
</dbReference>
<dbReference type="Pfam" id="PF19086">
    <property type="entry name" value="Terpene_syn_C_2"/>
    <property type="match status" value="1"/>
</dbReference>
<dbReference type="SFLD" id="SFLDS00005">
    <property type="entry name" value="Isoprenoid_Synthase_Type_I"/>
    <property type="match status" value="1"/>
</dbReference>
<dbReference type="SFLD" id="SFLDG01020">
    <property type="entry name" value="Terpene_Cyclase_Like_2"/>
    <property type="match status" value="1"/>
</dbReference>
<dbReference type="SUPFAM" id="SSF48576">
    <property type="entry name" value="Terpenoid synthases"/>
    <property type="match status" value="1"/>
</dbReference>
<evidence type="ECO:0000250" key="1">
    <source>
        <dbReference type="UniProtKB" id="B5HDJ6"/>
    </source>
</evidence>
<evidence type="ECO:0000250" key="2">
    <source>
        <dbReference type="UniProtKB" id="P0DL13"/>
    </source>
</evidence>
<evidence type="ECO:0000250" key="3">
    <source>
        <dbReference type="UniProtKB" id="Q9UR08"/>
    </source>
</evidence>
<evidence type="ECO:0000255" key="4">
    <source>
        <dbReference type="RuleBase" id="RU366034"/>
    </source>
</evidence>
<evidence type="ECO:0000269" key="5">
    <source>
    </source>
</evidence>
<evidence type="ECO:0000269" key="6">
    <source>
    </source>
</evidence>
<evidence type="ECO:0000303" key="7">
    <source>
    </source>
</evidence>
<evidence type="ECO:0000305" key="8"/>
<name>AGR8_CYCAE</name>
<gene>
    <name evidence="7" type="primary">Agr8</name>
</gene>